<gene>
    <name evidence="10" type="primary">MYDGF</name>
    <name evidence="10" type="synonym">C19orf10</name>
</gene>
<name>MYDGF_HUMAN</name>
<keyword id="KW-0002">3D-structure</keyword>
<keyword id="KW-0037">Angiogenesis</keyword>
<keyword id="KW-0053">Apoptosis</keyword>
<keyword id="KW-0903">Direct protein sequencing</keyword>
<keyword id="KW-0256">Endoplasmic reticulum</keyword>
<keyword id="KW-0333">Golgi apparatus</keyword>
<keyword id="KW-1267">Proteomics identification</keyword>
<keyword id="KW-1185">Reference proteome</keyword>
<keyword id="KW-0964">Secreted</keyword>
<keyword id="KW-0732">Signal</keyword>
<organism>
    <name type="scientific">Homo sapiens</name>
    <name type="common">Human</name>
    <dbReference type="NCBI Taxonomy" id="9606"/>
    <lineage>
        <taxon>Eukaryota</taxon>
        <taxon>Metazoa</taxon>
        <taxon>Chordata</taxon>
        <taxon>Craniata</taxon>
        <taxon>Vertebrata</taxon>
        <taxon>Euteleostomi</taxon>
        <taxon>Mammalia</taxon>
        <taxon>Eutheria</taxon>
        <taxon>Euarchontoglires</taxon>
        <taxon>Primates</taxon>
        <taxon>Haplorrhini</taxon>
        <taxon>Catarrhini</taxon>
        <taxon>Hominidae</taxon>
        <taxon>Homo</taxon>
    </lineage>
</organism>
<dbReference type="EMBL" id="AC005594">
    <property type="protein sequence ID" value="AAC33800.1"/>
    <property type="status" value="ALT_SEQ"/>
    <property type="molecule type" value="Genomic_DNA"/>
</dbReference>
<dbReference type="EMBL" id="AC005339">
    <property type="protein sequence ID" value="AAC27824.1"/>
    <property type="status" value="ALT_SEQ"/>
    <property type="molecule type" value="Genomic_DNA"/>
</dbReference>
<dbReference type="EMBL" id="CH471139">
    <property type="protein sequence ID" value="EAW69202.1"/>
    <property type="molecule type" value="Genomic_DNA"/>
</dbReference>
<dbReference type="EMBL" id="CH471139">
    <property type="protein sequence ID" value="EAW69203.1"/>
    <property type="molecule type" value="Genomic_DNA"/>
</dbReference>
<dbReference type="EMBL" id="BC003639">
    <property type="protein sequence ID" value="AAH03639.2"/>
    <property type="molecule type" value="mRNA"/>
</dbReference>
<dbReference type="EMBL" id="BC010129">
    <property type="protein sequence ID" value="AAH10129.1"/>
    <property type="molecule type" value="mRNA"/>
</dbReference>
<dbReference type="EMBL" id="BC014655">
    <property type="protein sequence ID" value="AAH14655.1"/>
    <property type="molecule type" value="mRNA"/>
</dbReference>
<dbReference type="EMBL" id="AL365373">
    <property type="protein sequence ID" value="CAB96947.1"/>
    <property type="molecule type" value="mRNA"/>
</dbReference>
<dbReference type="EMBL" id="AL365374">
    <property type="protein sequence ID" value="CAB96948.1"/>
    <property type="molecule type" value="mRNA"/>
</dbReference>
<dbReference type="CCDS" id="CCDS12133.1"/>
<dbReference type="RefSeq" id="NP_061980.1">
    <property type="nucleotide sequence ID" value="NM_019107.4"/>
</dbReference>
<dbReference type="PDB" id="6O6W">
    <property type="method" value="NMR"/>
    <property type="chains" value="A=32-173"/>
</dbReference>
<dbReference type="PDB" id="6SVK">
    <property type="method" value="X-ray"/>
    <property type="resolution" value="1.60 A"/>
    <property type="chains" value="A/B=32-173"/>
</dbReference>
<dbReference type="PDB" id="6SVL">
    <property type="method" value="X-ray"/>
    <property type="resolution" value="1.58 A"/>
    <property type="chains" value="C/F/J/N/Q/R=32-173"/>
</dbReference>
<dbReference type="PDBsum" id="6O6W"/>
<dbReference type="PDBsum" id="6SVK"/>
<dbReference type="PDBsum" id="6SVL"/>
<dbReference type="SMR" id="Q969H8"/>
<dbReference type="BioGRID" id="121028">
    <property type="interactions" value="67"/>
</dbReference>
<dbReference type="FunCoup" id="Q969H8">
    <property type="interactions" value="621"/>
</dbReference>
<dbReference type="IntAct" id="Q969H8">
    <property type="interactions" value="28"/>
</dbReference>
<dbReference type="STRING" id="9606.ENSP00000262947"/>
<dbReference type="GlyGen" id="Q969H8">
    <property type="glycosylation" value="1 site, 1 O-linked glycan (1 site)"/>
</dbReference>
<dbReference type="iPTMnet" id="Q969H8"/>
<dbReference type="MetOSite" id="Q969H8"/>
<dbReference type="PhosphoSitePlus" id="Q969H8"/>
<dbReference type="SwissPalm" id="Q969H8"/>
<dbReference type="BioMuta" id="MYDGF"/>
<dbReference type="DMDM" id="61221730"/>
<dbReference type="jPOST" id="Q969H8"/>
<dbReference type="MassIVE" id="Q969H8"/>
<dbReference type="PaxDb" id="9606-ENSP00000262947"/>
<dbReference type="PeptideAtlas" id="Q969H8"/>
<dbReference type="ProteomicsDB" id="75767"/>
<dbReference type="Pumba" id="Q969H8"/>
<dbReference type="TopDownProteomics" id="Q969H8"/>
<dbReference type="ABCD" id="Q969H8">
    <property type="antibodies" value="1 sequenced antibody"/>
</dbReference>
<dbReference type="Antibodypedia" id="23698">
    <property type="antibodies" value="242 antibodies from 30 providers"/>
</dbReference>
<dbReference type="DNASU" id="56005"/>
<dbReference type="Ensembl" id="ENST00000262947.8">
    <property type="protein sequence ID" value="ENSP00000262947.2"/>
    <property type="gene ID" value="ENSG00000074842.8"/>
</dbReference>
<dbReference type="GeneID" id="56005"/>
<dbReference type="KEGG" id="hsa:56005"/>
<dbReference type="MANE-Select" id="ENST00000262947.8">
    <property type="protein sequence ID" value="ENSP00000262947.2"/>
    <property type="RefSeq nucleotide sequence ID" value="NM_019107.4"/>
    <property type="RefSeq protein sequence ID" value="NP_061980.1"/>
</dbReference>
<dbReference type="UCSC" id="uc002may.4">
    <property type="organism name" value="human"/>
</dbReference>
<dbReference type="AGR" id="HGNC:16948"/>
<dbReference type="CTD" id="56005"/>
<dbReference type="DisGeNET" id="56005"/>
<dbReference type="GeneCards" id="MYDGF"/>
<dbReference type="HGNC" id="HGNC:16948">
    <property type="gene designation" value="MYDGF"/>
</dbReference>
<dbReference type="HPA" id="ENSG00000074842">
    <property type="expression patterns" value="Low tissue specificity"/>
</dbReference>
<dbReference type="MIM" id="606746">
    <property type="type" value="gene"/>
</dbReference>
<dbReference type="neXtProt" id="NX_Q969H8"/>
<dbReference type="OpenTargets" id="ENSG00000074842"/>
<dbReference type="PharmGKB" id="PA29827"/>
<dbReference type="VEuPathDB" id="HostDB:ENSG00000074842"/>
<dbReference type="eggNOG" id="ENOG502RZK9">
    <property type="taxonomic scope" value="Eukaryota"/>
</dbReference>
<dbReference type="GeneTree" id="ENSGT00390000000777"/>
<dbReference type="HOGENOM" id="CLU_132160_0_0_1"/>
<dbReference type="InParanoid" id="Q969H8"/>
<dbReference type="OMA" id="CIFTYAS"/>
<dbReference type="OrthoDB" id="10061830at2759"/>
<dbReference type="PAN-GO" id="Q969H8">
    <property type="GO annotations" value="3 GO annotations based on evolutionary models"/>
</dbReference>
<dbReference type="PhylomeDB" id="Q969H8"/>
<dbReference type="TreeFam" id="TF332795"/>
<dbReference type="PathwayCommons" id="Q969H8"/>
<dbReference type="Reactome" id="R-HSA-381038">
    <property type="pathway name" value="XBP1(S) activates chaperone genes"/>
</dbReference>
<dbReference type="SignaLink" id="Q969H8"/>
<dbReference type="BioGRID-ORCS" id="56005">
    <property type="hits" value="16 hits in 1160 CRISPR screens"/>
</dbReference>
<dbReference type="ChiTaRS" id="MYDGF">
    <property type="organism name" value="human"/>
</dbReference>
<dbReference type="GenomeRNAi" id="56005"/>
<dbReference type="Pharos" id="Q969H8">
    <property type="development level" value="Tbio"/>
</dbReference>
<dbReference type="PRO" id="PR:Q969H8"/>
<dbReference type="Proteomes" id="UP000005640">
    <property type="component" value="Chromosome 19"/>
</dbReference>
<dbReference type="RNAct" id="Q969H8">
    <property type="molecule type" value="protein"/>
</dbReference>
<dbReference type="Bgee" id="ENSG00000074842">
    <property type="expression patterns" value="Expressed in stromal cell of endometrium and 206 other cell types or tissues"/>
</dbReference>
<dbReference type="ExpressionAtlas" id="Q969H8">
    <property type="expression patterns" value="baseline and differential"/>
</dbReference>
<dbReference type="GO" id="GO:0005783">
    <property type="term" value="C:endoplasmic reticulum"/>
    <property type="evidence" value="ECO:0000314"/>
    <property type="project" value="UniProtKB"/>
</dbReference>
<dbReference type="GO" id="GO:0005788">
    <property type="term" value="C:endoplasmic reticulum lumen"/>
    <property type="evidence" value="ECO:0000304"/>
    <property type="project" value="Reactome"/>
</dbReference>
<dbReference type="GO" id="GO:0005793">
    <property type="term" value="C:endoplasmic reticulum-Golgi intermediate compartment"/>
    <property type="evidence" value="ECO:0007669"/>
    <property type="project" value="UniProtKB-SubCell"/>
</dbReference>
<dbReference type="GO" id="GO:0005615">
    <property type="term" value="C:extracellular space"/>
    <property type="evidence" value="ECO:0000314"/>
    <property type="project" value="UniProtKB"/>
</dbReference>
<dbReference type="GO" id="GO:0005794">
    <property type="term" value="C:Golgi apparatus"/>
    <property type="evidence" value="ECO:0000314"/>
    <property type="project" value="UniProtKB"/>
</dbReference>
<dbReference type="GO" id="GO:0001525">
    <property type="term" value="P:angiogenesis"/>
    <property type="evidence" value="ECO:0007669"/>
    <property type="project" value="UniProtKB-KW"/>
</dbReference>
<dbReference type="GO" id="GO:0006915">
    <property type="term" value="P:apoptotic process"/>
    <property type="evidence" value="ECO:0007669"/>
    <property type="project" value="UniProtKB-KW"/>
</dbReference>
<dbReference type="GO" id="GO:0043066">
    <property type="term" value="P:negative regulation of apoptotic process"/>
    <property type="evidence" value="ECO:0000250"/>
    <property type="project" value="UniProtKB"/>
</dbReference>
<dbReference type="GO" id="GO:0045766">
    <property type="term" value="P:positive regulation of angiogenesis"/>
    <property type="evidence" value="ECO:0000314"/>
    <property type="project" value="UniProtKB"/>
</dbReference>
<dbReference type="GO" id="GO:0001938">
    <property type="term" value="P:positive regulation of endothelial cell proliferation"/>
    <property type="evidence" value="ECO:0000314"/>
    <property type="project" value="UniProtKB"/>
</dbReference>
<dbReference type="GO" id="GO:0043410">
    <property type="term" value="P:positive regulation of MAPK cascade"/>
    <property type="evidence" value="ECO:0000250"/>
    <property type="project" value="UniProtKB"/>
</dbReference>
<dbReference type="GO" id="GO:0051897">
    <property type="term" value="P:positive regulation of phosphatidylinositol 3-kinase/protein kinase B signal transduction"/>
    <property type="evidence" value="ECO:0000250"/>
    <property type="project" value="UniProtKB"/>
</dbReference>
<dbReference type="GO" id="GO:0001934">
    <property type="term" value="P:positive regulation of protein phosphorylation"/>
    <property type="evidence" value="ECO:0000250"/>
    <property type="project" value="UniProtKB"/>
</dbReference>
<dbReference type="GO" id="GO:0045944">
    <property type="term" value="P:positive regulation of transcription by RNA polymerase II"/>
    <property type="evidence" value="ECO:0000250"/>
    <property type="project" value="UniProtKB"/>
</dbReference>
<dbReference type="InterPro" id="IPR018887">
    <property type="entry name" value="MYDGF"/>
</dbReference>
<dbReference type="PANTHER" id="PTHR31230:SF1">
    <property type="entry name" value="MYELOID-DERIVED GROWTH FACTOR"/>
    <property type="match status" value="1"/>
</dbReference>
<dbReference type="PANTHER" id="PTHR31230">
    <property type="entry name" value="MYELOID-DERIVED GROWTH FACTOR MYDGF"/>
    <property type="match status" value="1"/>
</dbReference>
<dbReference type="Pfam" id="PF10572">
    <property type="entry name" value="UPF0556"/>
    <property type="match status" value="1"/>
</dbReference>
<accession>Q969H8</accession>
<accession>D6W628</accession>
<accession>O75256</accession>
<accession>O75272</accession>
<accession>Q9BTK7</accession>
<accession>Q9NP69</accession>
<reference key="1">
    <citation type="journal article" date="2004" name="Nature">
        <title>The DNA sequence and biology of human chromosome 19.</title>
        <authorList>
            <person name="Grimwood J."/>
            <person name="Gordon L.A."/>
            <person name="Olsen A.S."/>
            <person name="Terry A."/>
            <person name="Schmutz J."/>
            <person name="Lamerdin J.E."/>
            <person name="Hellsten U."/>
            <person name="Goodstein D."/>
            <person name="Couronne O."/>
            <person name="Tran-Gyamfi M."/>
            <person name="Aerts A."/>
            <person name="Altherr M."/>
            <person name="Ashworth L."/>
            <person name="Bajorek E."/>
            <person name="Black S."/>
            <person name="Branscomb E."/>
            <person name="Caenepeel S."/>
            <person name="Carrano A.V."/>
            <person name="Caoile C."/>
            <person name="Chan Y.M."/>
            <person name="Christensen M."/>
            <person name="Cleland C.A."/>
            <person name="Copeland A."/>
            <person name="Dalin E."/>
            <person name="Dehal P."/>
            <person name="Denys M."/>
            <person name="Detter J.C."/>
            <person name="Escobar J."/>
            <person name="Flowers D."/>
            <person name="Fotopulos D."/>
            <person name="Garcia C."/>
            <person name="Georgescu A.M."/>
            <person name="Glavina T."/>
            <person name="Gomez M."/>
            <person name="Gonzales E."/>
            <person name="Groza M."/>
            <person name="Hammon N."/>
            <person name="Hawkins T."/>
            <person name="Haydu L."/>
            <person name="Ho I."/>
            <person name="Huang W."/>
            <person name="Israni S."/>
            <person name="Jett J."/>
            <person name="Kadner K."/>
            <person name="Kimball H."/>
            <person name="Kobayashi A."/>
            <person name="Larionov V."/>
            <person name="Leem S.-H."/>
            <person name="Lopez F."/>
            <person name="Lou Y."/>
            <person name="Lowry S."/>
            <person name="Malfatti S."/>
            <person name="Martinez D."/>
            <person name="McCready P.M."/>
            <person name="Medina C."/>
            <person name="Morgan J."/>
            <person name="Nelson K."/>
            <person name="Nolan M."/>
            <person name="Ovcharenko I."/>
            <person name="Pitluck S."/>
            <person name="Pollard M."/>
            <person name="Popkie A.P."/>
            <person name="Predki P."/>
            <person name="Quan G."/>
            <person name="Ramirez L."/>
            <person name="Rash S."/>
            <person name="Retterer J."/>
            <person name="Rodriguez A."/>
            <person name="Rogers S."/>
            <person name="Salamov A."/>
            <person name="Salazar A."/>
            <person name="She X."/>
            <person name="Smith D."/>
            <person name="Slezak T."/>
            <person name="Solovyev V."/>
            <person name="Thayer N."/>
            <person name="Tice H."/>
            <person name="Tsai M."/>
            <person name="Ustaszewska A."/>
            <person name="Vo N."/>
            <person name="Wagner M."/>
            <person name="Wheeler J."/>
            <person name="Wu K."/>
            <person name="Xie G."/>
            <person name="Yang J."/>
            <person name="Dubchak I."/>
            <person name="Furey T.S."/>
            <person name="DeJong P."/>
            <person name="Dickson M."/>
            <person name="Gordon D."/>
            <person name="Eichler E.E."/>
            <person name="Pennacchio L.A."/>
            <person name="Richardson P."/>
            <person name="Stubbs L."/>
            <person name="Rokhsar D.S."/>
            <person name="Myers R.M."/>
            <person name="Rubin E.M."/>
            <person name="Lucas S.M."/>
        </authorList>
    </citation>
    <scope>NUCLEOTIDE SEQUENCE [LARGE SCALE GENOMIC DNA]</scope>
</reference>
<reference key="2">
    <citation type="submission" date="2005-09" db="EMBL/GenBank/DDBJ databases">
        <authorList>
            <person name="Mural R.J."/>
            <person name="Istrail S."/>
            <person name="Sutton G.G."/>
            <person name="Florea L."/>
            <person name="Halpern A.L."/>
            <person name="Mobarry C.M."/>
            <person name="Lippert R."/>
            <person name="Walenz B."/>
            <person name="Shatkay H."/>
            <person name="Dew I."/>
            <person name="Miller J.R."/>
            <person name="Flanigan M.J."/>
            <person name="Edwards N.J."/>
            <person name="Bolanos R."/>
            <person name="Fasulo D."/>
            <person name="Halldorsson B.V."/>
            <person name="Hannenhalli S."/>
            <person name="Turner R."/>
            <person name="Yooseph S."/>
            <person name="Lu F."/>
            <person name="Nusskern D.R."/>
            <person name="Shue B.C."/>
            <person name="Zheng X.H."/>
            <person name="Zhong F."/>
            <person name="Delcher A.L."/>
            <person name="Huson D.H."/>
            <person name="Kravitz S.A."/>
            <person name="Mouchard L."/>
            <person name="Reinert K."/>
            <person name="Remington K.A."/>
            <person name="Clark A.G."/>
            <person name="Waterman M.S."/>
            <person name="Eichler E.E."/>
            <person name="Adams M.D."/>
            <person name="Hunkapiller M.W."/>
            <person name="Myers E.W."/>
            <person name="Venter J.C."/>
        </authorList>
    </citation>
    <scope>NUCLEOTIDE SEQUENCE [LARGE SCALE GENOMIC DNA]</scope>
</reference>
<reference key="3">
    <citation type="journal article" date="2004" name="Genome Res.">
        <title>The status, quality, and expansion of the NIH full-length cDNA project: the Mammalian Gene Collection (MGC).</title>
        <authorList>
            <consortium name="The MGC Project Team"/>
        </authorList>
    </citation>
    <scope>NUCLEOTIDE SEQUENCE [LARGE SCALE MRNA]</scope>
    <source>
        <tissue>Kidney</tissue>
        <tissue>Skin</tissue>
    </source>
</reference>
<reference key="4">
    <citation type="submission" date="2000-07" db="EMBL/GenBank/DDBJ databases">
        <authorList>
            <consortium name="The European IMAGE consortium"/>
        </authorList>
    </citation>
    <scope>NUCLEOTIDE SEQUENCE [LARGE SCALE MRNA] OF 4-173</scope>
</reference>
<reference key="5">
    <citation type="journal article" date="2009" name="Proc. Natl. Acad. Sci. U.S.A.">
        <title>Global profiling of protease cleavage sites by chemoselective labeling of protein N-termini.</title>
        <authorList>
            <person name="Xu G."/>
            <person name="Shin S.B."/>
            <person name="Jaffrey S.R."/>
        </authorList>
    </citation>
    <scope>PROTEIN SEQUENCE [LARGE SCALE ANALYSIS] OF 32-44</scope>
    <source>
        <tissue>Leukemic T-cell</tissue>
    </source>
</reference>
<reference key="6">
    <citation type="journal article" date="2001" name="J. Immunol.">
        <title>SF20/IL-25, a novel bone marrow stroma-derived growth factor that binds to mouse thymic shared antigen-1 and supports lymphoid cell proliferation.</title>
        <authorList>
            <person name="Tulin E.E."/>
            <person name="Onoda N."/>
            <person name="Nakata Y."/>
            <person name="Maeda M."/>
            <person name="Hasegawa M."/>
            <person name="Nomura H."/>
            <person name="Kitamura T."/>
        </authorList>
    </citation>
    <scope>RETRACTED PAPER</scope>
    <source>
        <tissue>Bone marrow</tissue>
    </source>
</reference>
<reference key="7">
    <citation type="journal article" date="2003" name="J. Immunol.">
        <authorList>
            <person name="Tulin E.E."/>
            <person name="Onoda N."/>
            <person name="Nakata Y."/>
            <person name="Maeda M."/>
            <person name="Hasegawa M."/>
            <person name="Nomura H."/>
            <person name="Kitamura T."/>
        </authorList>
    </citation>
    <scope>RETRACTION NOTICE OF PUBMED:11714798</scope>
</reference>
<reference key="8">
    <citation type="journal article" date="2007" name="Arthritis Res. Ther.">
        <title>The identification and characterization of a novel protein, c19orf10, in the synovium.</title>
        <authorList>
            <person name="Weiler T."/>
            <person name="Du Q."/>
            <person name="Krokhin O."/>
            <person name="Ens W."/>
            <person name="Standing K."/>
            <person name="El-Gabalawy H."/>
            <person name="Wilkins J.A."/>
        </authorList>
    </citation>
    <scope>TISSUE SPECIFICITY</scope>
    <scope>SUBCELLULAR LOCATION</scope>
</reference>
<reference key="9">
    <citation type="journal article" date="2011" name="BMC Syst. Biol.">
        <title>Initial characterization of the human central proteome.</title>
        <authorList>
            <person name="Burkard T.R."/>
            <person name="Planyavsky M."/>
            <person name="Kaupe I."/>
            <person name="Breitwieser F.P."/>
            <person name="Buerckstuemmer T."/>
            <person name="Bennett K.L."/>
            <person name="Superti-Furga G."/>
            <person name="Colinge J."/>
        </authorList>
    </citation>
    <scope>IDENTIFICATION BY MASS SPECTROMETRY [LARGE SCALE ANALYSIS]</scope>
</reference>
<reference key="10">
    <citation type="journal article" date="2015" name="Nat. Med.">
        <title>Myeloid-derived growth factor (C19orf10) mediates cardiac repair following myocardial infarction.</title>
        <authorList>
            <person name="Korf-Klingebiel M."/>
            <person name="Reboll M.R."/>
            <person name="Klede S."/>
            <person name="Brod T."/>
            <person name="Pich A."/>
            <person name="Polten F."/>
            <person name="Napp L.C."/>
            <person name="Bauersachs J."/>
            <person name="Ganser A."/>
            <person name="Brinkmann E."/>
            <person name="Reimann I."/>
            <person name="Kempf T."/>
            <person name="Niessen H.W."/>
            <person name="Mizrahi J."/>
            <person name="Schoenfeld H.J."/>
            <person name="Iglesias A."/>
            <person name="Bobadilla M."/>
            <person name="Wang Y."/>
            <person name="Wollert K.C."/>
        </authorList>
    </citation>
    <scope>FUNCTION</scope>
    <scope>SUBCELLULAR LOCATION</scope>
    <scope>TISSUE SPECIFICITY</scope>
    <scope>INDUCTION</scope>
</reference>
<reference key="11">
    <citation type="journal article" date="2015" name="Proteomics">
        <title>N-terminome analysis of the human mitochondrial proteome.</title>
        <authorList>
            <person name="Vaca Jacome A.S."/>
            <person name="Rabilloud T."/>
            <person name="Schaeffer-Reiss C."/>
            <person name="Rompais M."/>
            <person name="Ayoub D."/>
            <person name="Lane L."/>
            <person name="Bairoch A."/>
            <person name="Van Dorsselaer A."/>
            <person name="Carapito C."/>
        </authorList>
    </citation>
    <scope>IDENTIFICATION BY MASS SPECTROMETRY [LARGE SCALE ANALYSIS]</scope>
</reference>
<reference key="12">
    <citation type="journal article" date="2018" name="J. Biol. Chem.">
        <title>Myeloid-derived growth factor is a resident endoplasmic reticulum protein.</title>
        <authorList>
            <person name="Bortnov V."/>
            <person name="Annis D.S."/>
            <person name="Fogerty F.J."/>
            <person name="Barretto K.T."/>
            <person name="Turton K.B."/>
            <person name="Mosher D.F."/>
        </authorList>
    </citation>
    <scope>SUBCELLULAR LOCATION</scope>
    <scope>TISSUE SPECIFICITY</scope>
    <scope>MUTAGENESIS OF 172-GLU-LEU-173</scope>
</reference>
<proteinExistence type="evidence at protein level"/>
<comment type="function">
    <text evidence="1 4">Bone marrow-derived monocyte and paracrine-acting protein that promotes cardiac myocyte survival and adaptive angiogenesis for cardiac protection and/or repair after myocardial infarction (MI). Stimulates endothelial cell proliferation through a MAPK1/3-, STAT3- and CCND1-mediated signaling pathway. Inhibits cardiac myocyte apoptosis in a PI3K/AKT-dependent signaling pathway (By similarity). Involved in endothelial cell proliferation and angiogenesis (PubMed:25581518).</text>
</comment>
<comment type="interaction">
    <interactant intactId="EBI-718622">
        <id>Q969H8</id>
    </interactant>
    <interactant intactId="EBI-1045357">
        <id>Q9NPJ3</id>
        <label>ACOT13</label>
    </interactant>
    <organismsDiffer>false</organismsDiffer>
    <experiments>3</experiments>
</comment>
<comment type="interaction">
    <interactant intactId="EBI-718622">
        <id>Q969H8</id>
    </interactant>
    <interactant intactId="EBI-742054">
        <id>Q96D03</id>
        <label>DDIT4L</label>
    </interactant>
    <organismsDiffer>false</organismsDiffer>
    <experiments>3</experiments>
</comment>
<comment type="interaction">
    <interactant intactId="EBI-718622">
        <id>Q969H8</id>
    </interactant>
    <interactant intactId="EBI-711990">
        <id>O00303</id>
        <label>EIF3F</label>
    </interactant>
    <organismsDiffer>false</organismsDiffer>
    <experiments>3</experiments>
</comment>
<comment type="interaction">
    <interactant intactId="EBI-718622">
        <id>Q969H8</id>
    </interactant>
    <interactant intactId="EBI-12197079">
        <id>P84074</id>
        <label>HPCA</label>
    </interactant>
    <organismsDiffer>false</organismsDiffer>
    <experiments>6</experiments>
</comment>
<comment type="interaction">
    <interactant intactId="EBI-718622">
        <id>Q969H8</id>
    </interactant>
    <interactant intactId="EBI-749311">
        <id>P37235</id>
        <label>HPCAL1</label>
    </interactant>
    <organismsDiffer>false</organismsDiffer>
    <experiments>4</experiments>
</comment>
<comment type="interaction">
    <interactant intactId="EBI-718622">
        <id>Q969H8</id>
    </interactant>
    <interactant intactId="EBI-11911016">
        <id>P80188</id>
        <label>LCN2</label>
    </interactant>
    <organismsDiffer>false</organismsDiffer>
    <experiments>3</experiments>
</comment>
<comment type="interaction">
    <interactant intactId="EBI-718622">
        <id>Q969H8</id>
    </interactant>
    <interactant intactId="EBI-2865580">
        <id>O43679</id>
        <label>LDB2</label>
    </interactant>
    <organismsDiffer>false</organismsDiffer>
    <experiments>3</experiments>
</comment>
<comment type="interaction">
    <interactant intactId="EBI-718622">
        <id>Q969H8</id>
    </interactant>
    <interactant intactId="EBI-749635">
        <id>P61601</id>
        <label>NCALD</label>
    </interactant>
    <organismsDiffer>false</organismsDiffer>
    <experiments>5</experiments>
</comment>
<comment type="interaction">
    <interactant intactId="EBI-718622">
        <id>Q969H8</id>
    </interactant>
    <interactant intactId="EBI-953879">
        <id>Q14554</id>
        <label>PDIA5</label>
    </interactant>
    <organismsDiffer>false</organismsDiffer>
    <experiments>2</experiments>
</comment>
<comment type="interaction">
    <interactant intactId="EBI-718622">
        <id>Q969H8</id>
    </interactant>
    <interactant intactId="EBI-347996">
        <id>O43765</id>
        <label>SGTA</label>
    </interactant>
    <organismsDiffer>false</organismsDiffer>
    <experiments>8</experiments>
</comment>
<comment type="interaction">
    <interactant intactId="EBI-718622">
        <id>Q969H8</id>
    </interactant>
    <interactant intactId="EBI-744081">
        <id>Q96EQ0</id>
        <label>SGTB</label>
    </interactant>
    <organismsDiffer>false</organismsDiffer>
    <experiments>3</experiments>
</comment>
<comment type="interaction">
    <interactant intactId="EBI-718622">
        <id>Q969H8</id>
    </interactant>
    <interactant intactId="EBI-741480">
        <id>Q9UMX0</id>
        <label>UBQLN1</label>
    </interactant>
    <organismsDiffer>false</organismsDiffer>
    <experiments>3</experiments>
</comment>
<comment type="interaction">
    <interactant intactId="EBI-718622">
        <id>Q969H8</id>
    </interactant>
    <interactant intactId="EBI-947187">
        <id>Q9UHD9</id>
        <label>UBQLN2</label>
    </interactant>
    <organismsDiffer>false</organismsDiffer>
    <experiments>3</experiments>
</comment>
<comment type="subcellular location">
    <subcellularLocation>
        <location evidence="2 4">Secreted</location>
    </subcellularLocation>
    <subcellularLocation>
        <location evidence="2">Endoplasmic reticulum-Golgi intermediate compartment</location>
    </subcellularLocation>
    <subcellularLocation>
        <location evidence="5">Endoplasmic reticulum</location>
    </subcellularLocation>
    <subcellularLocation>
        <location evidence="5">Golgi apparatus</location>
    </subcellularLocation>
    <text evidence="4 5">The C-terminal RTEL motif may provide retention in the endoplasmic reticulum.</text>
</comment>
<comment type="tissue specificity">
    <text evidence="2 4 5">Expressed in eosinophils (at protein level) (PubMed:29954947). Expressed in bone marrow cells (PubMed:25581518). Expressed in synovial tissue. Found in synovial fluid of patients with arthropaties (PubMed:17362502).</text>
</comment>
<comment type="induction">
    <text evidence="4">Up-regulated in response to myocardial infarction (MI).</text>
</comment>
<comment type="similarity">
    <text evidence="7">Belongs to the MYDGF family.</text>
</comment>
<comment type="caution">
    <text evidence="8 9">Was originally thought to signal lymphoid cells to proliferate via thymic shared antigen 1 (PubMed:11714798). This work was later retracted (PubMed:12538725).</text>
</comment>
<comment type="caution">
    <text evidence="2 4 5">It has been reported that MYDGF is secreted into blood plasma and localized to the endoplasmic reticulum-Golgi intermediate compartment (PubMed:17362502, PubMed:25581518). However, another report shows resident localization to the endoplasmic reticulum and Golgi apparatus and secretion when the two most C-terminal residues of the RTEL motif are abolished (PubMed:29954947).</text>
</comment>
<comment type="sequence caution" evidence="7">
    <conflict type="erroneous gene model prediction">
        <sequence resource="EMBL-CDS" id="AAC27824"/>
    </conflict>
</comment>
<comment type="sequence caution" evidence="7">
    <conflict type="erroneous gene model prediction">
        <sequence resource="EMBL-CDS" id="AAC33800"/>
    </conflict>
</comment>
<evidence type="ECO:0000250" key="1">
    <source>
        <dbReference type="UniProtKB" id="Q9CPT4"/>
    </source>
</evidence>
<evidence type="ECO:0000269" key="2">
    <source>
    </source>
</evidence>
<evidence type="ECO:0000269" key="3">
    <source>
    </source>
</evidence>
<evidence type="ECO:0000269" key="4">
    <source>
    </source>
</evidence>
<evidence type="ECO:0000269" key="5">
    <source>
    </source>
</evidence>
<evidence type="ECO:0000303" key="6">
    <source>
    </source>
</evidence>
<evidence type="ECO:0000305" key="7"/>
<evidence type="ECO:0000305" key="8">
    <source>
    </source>
</evidence>
<evidence type="ECO:0000305" key="9">
    <source>
    </source>
</evidence>
<evidence type="ECO:0000312" key="10">
    <source>
        <dbReference type="HGNC" id="HGNC:16948"/>
    </source>
</evidence>
<evidence type="ECO:0007829" key="11">
    <source>
        <dbReference type="PDB" id="6SVL"/>
    </source>
</evidence>
<sequence>MAAPSGGWNGVGASLWAALLLGAVALRPAEAVSEPTTVAFDVRPGGVVHSFSHNVGPGDKYTCMFTYASQGGTNEQWQMSLGTSEDHQHFTCTIWRPQGKSYLYFTQFKAEVRGAEIEYAMAYSKAAFERESDVPLKTEEFEVTKTAVAHRPGAFKAELSKLVIVAKASRTEL</sequence>
<protein>
    <recommendedName>
        <fullName evidence="6 10">Myeloid-derived growth factor</fullName>
        <shortName evidence="6">MYDGF</shortName>
    </recommendedName>
</protein>
<feature type="signal peptide" evidence="3">
    <location>
        <begin position="1"/>
        <end position="31"/>
    </location>
</feature>
<feature type="chain" id="PRO_0000021008" description="Myeloid-derived growth factor">
    <location>
        <begin position="32"/>
        <end position="173"/>
    </location>
</feature>
<feature type="sequence variant" id="VAR_060183" description="In dbSNP:rs2270090.">
    <original>G</original>
    <variation>R</variation>
    <location>
        <position position="12"/>
    </location>
</feature>
<feature type="mutagenesis site" description="Increased secretion." evidence="5">
    <location>
        <begin position="172"/>
        <end position="173"/>
    </location>
</feature>
<feature type="strand" evidence="11">
    <location>
        <begin position="39"/>
        <end position="42"/>
    </location>
</feature>
<feature type="strand" evidence="11">
    <location>
        <begin position="49"/>
        <end position="53"/>
    </location>
</feature>
<feature type="helix" evidence="11">
    <location>
        <begin position="57"/>
        <end position="59"/>
    </location>
</feature>
<feature type="strand" evidence="11">
    <location>
        <begin position="63"/>
        <end position="70"/>
    </location>
</feature>
<feature type="strand" evidence="11">
    <location>
        <begin position="75"/>
        <end position="80"/>
    </location>
</feature>
<feature type="strand" evidence="11">
    <location>
        <begin position="93"/>
        <end position="95"/>
    </location>
</feature>
<feature type="strand" evidence="11">
    <location>
        <begin position="104"/>
        <end position="111"/>
    </location>
</feature>
<feature type="strand" evidence="11">
    <location>
        <begin position="113"/>
        <end position="119"/>
    </location>
</feature>
<feature type="strand" evidence="11">
    <location>
        <begin position="121"/>
        <end position="124"/>
    </location>
</feature>
<feature type="helix" evidence="11">
    <location>
        <begin position="138"/>
        <end position="140"/>
    </location>
</feature>
<feature type="strand" evidence="11">
    <location>
        <begin position="141"/>
        <end position="143"/>
    </location>
</feature>
<feature type="strand" evidence="11">
    <location>
        <begin position="145"/>
        <end position="150"/>
    </location>
</feature>
<feature type="turn" evidence="11">
    <location>
        <begin position="152"/>
        <end position="154"/>
    </location>
</feature>
<feature type="strand" evidence="11">
    <location>
        <begin position="160"/>
        <end position="163"/>
    </location>
</feature>